<sequence>MSKKFAHTQEELEKLSLKELENLAASMREKIIQVVSKNGGHLSSNLGAVELSIAMHLVFDAKKDPFIFDVSHQSYTHKLLSGKEEIFDTLRQINGLSGYTKPSEGDYFVAGHSSTSISLAVGACKAIALKGEKRIPVALIGDGALSAGMAYEALNELGDSKFPCVILLNDNEMSISKPIGAISKYLSQAMATQFYQSFKKRIAKMLDILPDSATYMAKRFEESFKLITPGLLFEELGLEYIGPIDGHNLGEIISALKQAKAMQKPCVIHAQTIKGKGYALAEGKHAKWHGVGAFDIDSGESVKKSDTKKSATEIFSKNLLDLASKYENIVGVTAAMPSGTGLDKLIEKYPNRFWDVAIAEQHAVTSMAAMAKEGFKPFIAIYSTFLQRAYDQVIHDCAIMNLNVVFAMDRAGIVGEDGETHQGVFDLSFLAPLPNFTLLAPRDEQMMQNIMEYAYLHQGPIALRYPRGSFILDKEFNPCEIKLGKAQWLVKNNSEIAFLGYGQGVAKAWQVLRALQEMNNNANLIDLIFAKPLDEELLCELAKKSKIWFIFSENVKIGGIESLINNFLQKYDLHVKVVSFEYEDKFIEHGKTSEVEKNLEKDVNSLLTKVLKFYH</sequence>
<dbReference type="EC" id="2.2.1.7" evidence="1"/>
<dbReference type="EMBL" id="AL111168">
    <property type="protein sequence ID" value="CAL34472.1"/>
    <property type="molecule type" value="Genomic_DNA"/>
</dbReference>
<dbReference type="PIR" id="E81451">
    <property type="entry name" value="E81451"/>
</dbReference>
<dbReference type="RefSeq" id="WP_002858717.1">
    <property type="nucleotide sequence ID" value="NZ_SZUC01000004.1"/>
</dbReference>
<dbReference type="RefSeq" id="YP_002343759.1">
    <property type="nucleotide sequence ID" value="NC_002163.1"/>
</dbReference>
<dbReference type="SMR" id="Q9PIH8"/>
<dbReference type="IntAct" id="Q9PIH8">
    <property type="interactions" value="6"/>
</dbReference>
<dbReference type="STRING" id="192222.Cj0321"/>
<dbReference type="PaxDb" id="192222-Cj0321"/>
<dbReference type="EnsemblBacteria" id="CAL34472">
    <property type="protein sequence ID" value="CAL34472"/>
    <property type="gene ID" value="Cj0321"/>
</dbReference>
<dbReference type="GeneID" id="904645"/>
<dbReference type="KEGG" id="cje:Cj0321"/>
<dbReference type="PATRIC" id="fig|192222.6.peg.313"/>
<dbReference type="eggNOG" id="COG1154">
    <property type="taxonomic scope" value="Bacteria"/>
</dbReference>
<dbReference type="HOGENOM" id="CLU_009227_1_4_7"/>
<dbReference type="OrthoDB" id="9803371at2"/>
<dbReference type="UniPathway" id="UPA00064">
    <property type="reaction ID" value="UER00091"/>
</dbReference>
<dbReference type="Proteomes" id="UP000000799">
    <property type="component" value="Chromosome"/>
</dbReference>
<dbReference type="GO" id="GO:0005829">
    <property type="term" value="C:cytosol"/>
    <property type="evidence" value="ECO:0007669"/>
    <property type="project" value="TreeGrafter"/>
</dbReference>
<dbReference type="GO" id="GO:0008661">
    <property type="term" value="F:1-deoxy-D-xylulose-5-phosphate synthase activity"/>
    <property type="evidence" value="ECO:0007669"/>
    <property type="project" value="UniProtKB-UniRule"/>
</dbReference>
<dbReference type="GO" id="GO:0000287">
    <property type="term" value="F:magnesium ion binding"/>
    <property type="evidence" value="ECO:0007669"/>
    <property type="project" value="UniProtKB-UniRule"/>
</dbReference>
<dbReference type="GO" id="GO:0030976">
    <property type="term" value="F:thiamine pyrophosphate binding"/>
    <property type="evidence" value="ECO:0007669"/>
    <property type="project" value="UniProtKB-UniRule"/>
</dbReference>
<dbReference type="GO" id="GO:0052865">
    <property type="term" value="P:1-deoxy-D-xylulose 5-phosphate biosynthetic process"/>
    <property type="evidence" value="ECO:0007669"/>
    <property type="project" value="UniProtKB-UniPathway"/>
</dbReference>
<dbReference type="GO" id="GO:0019288">
    <property type="term" value="P:isopentenyl diphosphate biosynthetic process, methylerythritol 4-phosphate pathway"/>
    <property type="evidence" value="ECO:0007669"/>
    <property type="project" value="TreeGrafter"/>
</dbReference>
<dbReference type="GO" id="GO:0016114">
    <property type="term" value="P:terpenoid biosynthetic process"/>
    <property type="evidence" value="ECO:0007669"/>
    <property type="project" value="UniProtKB-UniRule"/>
</dbReference>
<dbReference type="GO" id="GO:0009228">
    <property type="term" value="P:thiamine biosynthetic process"/>
    <property type="evidence" value="ECO:0007669"/>
    <property type="project" value="UniProtKB-UniRule"/>
</dbReference>
<dbReference type="CDD" id="cd02007">
    <property type="entry name" value="TPP_DXS"/>
    <property type="match status" value="1"/>
</dbReference>
<dbReference type="CDD" id="cd07033">
    <property type="entry name" value="TPP_PYR_DXS_TK_like"/>
    <property type="match status" value="1"/>
</dbReference>
<dbReference type="Gene3D" id="3.40.50.920">
    <property type="match status" value="1"/>
</dbReference>
<dbReference type="Gene3D" id="3.40.50.970">
    <property type="match status" value="2"/>
</dbReference>
<dbReference type="HAMAP" id="MF_00315">
    <property type="entry name" value="DXP_synth"/>
    <property type="match status" value="1"/>
</dbReference>
<dbReference type="InterPro" id="IPR005477">
    <property type="entry name" value="Dxylulose-5-P_synthase"/>
</dbReference>
<dbReference type="InterPro" id="IPR029061">
    <property type="entry name" value="THDP-binding"/>
</dbReference>
<dbReference type="InterPro" id="IPR009014">
    <property type="entry name" value="Transketo_C/PFOR_II"/>
</dbReference>
<dbReference type="InterPro" id="IPR005475">
    <property type="entry name" value="Transketolase-like_Pyr-bd"/>
</dbReference>
<dbReference type="InterPro" id="IPR020826">
    <property type="entry name" value="Transketolase_BS"/>
</dbReference>
<dbReference type="InterPro" id="IPR033248">
    <property type="entry name" value="Transketolase_C"/>
</dbReference>
<dbReference type="InterPro" id="IPR049557">
    <property type="entry name" value="Transketolase_CS"/>
</dbReference>
<dbReference type="NCBIfam" id="TIGR00204">
    <property type="entry name" value="dxs"/>
    <property type="match status" value="1"/>
</dbReference>
<dbReference type="NCBIfam" id="NF003933">
    <property type="entry name" value="PRK05444.2-2"/>
    <property type="match status" value="1"/>
</dbReference>
<dbReference type="PANTHER" id="PTHR43322">
    <property type="entry name" value="1-D-DEOXYXYLULOSE 5-PHOSPHATE SYNTHASE-RELATED"/>
    <property type="match status" value="1"/>
</dbReference>
<dbReference type="PANTHER" id="PTHR43322:SF5">
    <property type="entry name" value="1-DEOXY-D-XYLULOSE-5-PHOSPHATE SYNTHASE, CHLOROPLASTIC"/>
    <property type="match status" value="1"/>
</dbReference>
<dbReference type="Pfam" id="PF13292">
    <property type="entry name" value="DXP_synthase_N"/>
    <property type="match status" value="1"/>
</dbReference>
<dbReference type="Pfam" id="PF02779">
    <property type="entry name" value="Transket_pyr"/>
    <property type="match status" value="1"/>
</dbReference>
<dbReference type="Pfam" id="PF02780">
    <property type="entry name" value="Transketolase_C"/>
    <property type="match status" value="1"/>
</dbReference>
<dbReference type="SMART" id="SM00861">
    <property type="entry name" value="Transket_pyr"/>
    <property type="match status" value="1"/>
</dbReference>
<dbReference type="SUPFAM" id="SSF52518">
    <property type="entry name" value="Thiamin diphosphate-binding fold (THDP-binding)"/>
    <property type="match status" value="2"/>
</dbReference>
<dbReference type="SUPFAM" id="SSF52922">
    <property type="entry name" value="TK C-terminal domain-like"/>
    <property type="match status" value="1"/>
</dbReference>
<dbReference type="PROSITE" id="PS00801">
    <property type="entry name" value="TRANSKETOLASE_1"/>
    <property type="match status" value="1"/>
</dbReference>
<dbReference type="PROSITE" id="PS00802">
    <property type="entry name" value="TRANSKETOLASE_2"/>
    <property type="match status" value="1"/>
</dbReference>
<accession>Q9PIH8</accession>
<accession>Q0PBI8</accession>
<reference key="1">
    <citation type="journal article" date="2000" name="Nature">
        <title>The genome sequence of the food-borne pathogen Campylobacter jejuni reveals hypervariable sequences.</title>
        <authorList>
            <person name="Parkhill J."/>
            <person name="Wren B.W."/>
            <person name="Mungall K.L."/>
            <person name="Ketley J.M."/>
            <person name="Churcher C.M."/>
            <person name="Basham D."/>
            <person name="Chillingworth T."/>
            <person name="Davies R.M."/>
            <person name="Feltwell T."/>
            <person name="Holroyd S."/>
            <person name="Jagels K."/>
            <person name="Karlyshev A.V."/>
            <person name="Moule S."/>
            <person name="Pallen M.J."/>
            <person name="Penn C.W."/>
            <person name="Quail M.A."/>
            <person name="Rajandream M.A."/>
            <person name="Rutherford K.M."/>
            <person name="van Vliet A.H.M."/>
            <person name="Whitehead S."/>
            <person name="Barrell B.G."/>
        </authorList>
    </citation>
    <scope>NUCLEOTIDE SEQUENCE [LARGE SCALE GENOMIC DNA]</scope>
    <source>
        <strain>ATCC 700819 / NCTC 11168</strain>
    </source>
</reference>
<organism>
    <name type="scientific">Campylobacter jejuni subsp. jejuni serotype O:2 (strain ATCC 700819 / NCTC 11168)</name>
    <dbReference type="NCBI Taxonomy" id="192222"/>
    <lineage>
        <taxon>Bacteria</taxon>
        <taxon>Pseudomonadati</taxon>
        <taxon>Campylobacterota</taxon>
        <taxon>Epsilonproteobacteria</taxon>
        <taxon>Campylobacterales</taxon>
        <taxon>Campylobacteraceae</taxon>
        <taxon>Campylobacter</taxon>
    </lineage>
</organism>
<feature type="chain" id="PRO_0000189096" description="1-deoxy-D-xylulose-5-phosphate synthase">
    <location>
        <begin position="1"/>
        <end position="615"/>
    </location>
</feature>
<feature type="binding site" evidence="1">
    <location>
        <position position="72"/>
    </location>
    <ligand>
        <name>thiamine diphosphate</name>
        <dbReference type="ChEBI" id="CHEBI:58937"/>
    </ligand>
</feature>
<feature type="binding site" evidence="1">
    <location>
        <begin position="111"/>
        <end position="113"/>
    </location>
    <ligand>
        <name>thiamine diphosphate</name>
        <dbReference type="ChEBI" id="CHEBI:58937"/>
    </ligand>
</feature>
<feature type="binding site" evidence="1">
    <location>
        <position position="142"/>
    </location>
    <ligand>
        <name>Mg(2+)</name>
        <dbReference type="ChEBI" id="CHEBI:18420"/>
    </ligand>
</feature>
<feature type="binding site" evidence="1">
    <location>
        <begin position="143"/>
        <end position="144"/>
    </location>
    <ligand>
        <name>thiamine diphosphate</name>
        <dbReference type="ChEBI" id="CHEBI:58937"/>
    </ligand>
</feature>
<feature type="binding site" evidence="1">
    <location>
        <position position="171"/>
    </location>
    <ligand>
        <name>Mg(2+)</name>
        <dbReference type="ChEBI" id="CHEBI:18420"/>
    </ligand>
</feature>
<feature type="binding site" evidence="1">
    <location>
        <position position="171"/>
    </location>
    <ligand>
        <name>thiamine diphosphate</name>
        <dbReference type="ChEBI" id="CHEBI:58937"/>
    </ligand>
</feature>
<feature type="binding site" evidence="1">
    <location>
        <position position="278"/>
    </location>
    <ligand>
        <name>thiamine diphosphate</name>
        <dbReference type="ChEBI" id="CHEBI:58937"/>
    </ligand>
</feature>
<feature type="binding site" evidence="1">
    <location>
        <position position="360"/>
    </location>
    <ligand>
        <name>thiamine diphosphate</name>
        <dbReference type="ChEBI" id="CHEBI:58937"/>
    </ligand>
</feature>
<protein>
    <recommendedName>
        <fullName evidence="1">1-deoxy-D-xylulose-5-phosphate synthase</fullName>
        <ecNumber evidence="1">2.2.1.7</ecNumber>
    </recommendedName>
    <alternativeName>
        <fullName evidence="1">1-deoxyxylulose-5-phosphate synthase</fullName>
        <shortName evidence="1">DXP synthase</shortName>
        <shortName evidence="1">DXPS</shortName>
    </alternativeName>
</protein>
<proteinExistence type="inferred from homology"/>
<evidence type="ECO:0000255" key="1">
    <source>
        <dbReference type="HAMAP-Rule" id="MF_00315"/>
    </source>
</evidence>
<gene>
    <name evidence="1" type="primary">dxs</name>
    <name type="ordered locus">Cj0321</name>
</gene>
<keyword id="KW-0414">Isoprene biosynthesis</keyword>
<keyword id="KW-0460">Magnesium</keyword>
<keyword id="KW-0479">Metal-binding</keyword>
<keyword id="KW-1185">Reference proteome</keyword>
<keyword id="KW-0784">Thiamine biosynthesis</keyword>
<keyword id="KW-0786">Thiamine pyrophosphate</keyword>
<keyword id="KW-0808">Transferase</keyword>
<comment type="function">
    <text evidence="1">Catalyzes the acyloin condensation reaction between C atoms 2 and 3 of pyruvate and glyceraldehyde 3-phosphate to yield 1-deoxy-D-xylulose-5-phosphate (DXP).</text>
</comment>
<comment type="catalytic activity">
    <reaction evidence="1">
        <text>D-glyceraldehyde 3-phosphate + pyruvate + H(+) = 1-deoxy-D-xylulose 5-phosphate + CO2</text>
        <dbReference type="Rhea" id="RHEA:12605"/>
        <dbReference type="ChEBI" id="CHEBI:15361"/>
        <dbReference type="ChEBI" id="CHEBI:15378"/>
        <dbReference type="ChEBI" id="CHEBI:16526"/>
        <dbReference type="ChEBI" id="CHEBI:57792"/>
        <dbReference type="ChEBI" id="CHEBI:59776"/>
        <dbReference type="EC" id="2.2.1.7"/>
    </reaction>
</comment>
<comment type="cofactor">
    <cofactor evidence="1">
        <name>Mg(2+)</name>
        <dbReference type="ChEBI" id="CHEBI:18420"/>
    </cofactor>
    <text evidence="1">Binds 1 Mg(2+) ion per subunit.</text>
</comment>
<comment type="cofactor">
    <cofactor evidence="1">
        <name>thiamine diphosphate</name>
        <dbReference type="ChEBI" id="CHEBI:58937"/>
    </cofactor>
    <text evidence="1">Binds 1 thiamine pyrophosphate per subunit.</text>
</comment>
<comment type="pathway">
    <text evidence="1">Metabolic intermediate biosynthesis; 1-deoxy-D-xylulose 5-phosphate biosynthesis; 1-deoxy-D-xylulose 5-phosphate from D-glyceraldehyde 3-phosphate and pyruvate: step 1/1.</text>
</comment>
<comment type="subunit">
    <text evidence="1">Homodimer.</text>
</comment>
<comment type="similarity">
    <text evidence="1">Belongs to the transketolase family. DXPS subfamily.</text>
</comment>
<name>DXS_CAMJE</name>